<keyword id="KW-0414">Isoprene biosynthesis</keyword>
<keyword id="KW-0456">Lyase</keyword>
<keyword id="KW-0479">Metal-binding</keyword>
<sequence length="162" mass="17622">MKKPFRIGFGFDVHRLSEGYPLWMGGVRLEHSKGLEGHSDADVLIHAICDALLGAAALRDIGYHFPPSDPQYKGIDSKILLARAMELVRSQGYELGNIDATIAAEQPKLNPHIPDMQRVLAEVIQVEVSDISLKATTTEKLGFTGREEGISAYAVALLIAAV</sequence>
<proteinExistence type="inferred from homology"/>
<accession>B2RGP8</accession>
<name>ISPF_PORG3</name>
<evidence type="ECO:0000255" key="1">
    <source>
        <dbReference type="HAMAP-Rule" id="MF_00107"/>
    </source>
</evidence>
<protein>
    <recommendedName>
        <fullName evidence="1">2-C-methyl-D-erythritol 2,4-cyclodiphosphate synthase</fullName>
        <shortName evidence="1">MECDP-synthase</shortName>
        <shortName evidence="1">MECPP-synthase</shortName>
        <shortName evidence="1">MECPS</shortName>
        <ecNumber evidence="1">4.6.1.12</ecNumber>
    </recommendedName>
</protein>
<gene>
    <name evidence="1" type="primary">ispF</name>
    <name type="ordered locus">PGN_0024</name>
</gene>
<feature type="chain" id="PRO_1000094278" description="2-C-methyl-D-erythritol 2,4-cyclodiphosphate synthase">
    <location>
        <begin position="1"/>
        <end position="162"/>
    </location>
</feature>
<feature type="binding site" evidence="1">
    <location>
        <begin position="12"/>
        <end position="14"/>
    </location>
    <ligand>
        <name>4-CDP-2-C-methyl-D-erythritol 2-phosphate</name>
        <dbReference type="ChEBI" id="CHEBI:57919"/>
    </ligand>
</feature>
<feature type="binding site" evidence="1">
    <location>
        <position position="12"/>
    </location>
    <ligand>
        <name>a divalent metal cation</name>
        <dbReference type="ChEBI" id="CHEBI:60240"/>
    </ligand>
</feature>
<feature type="binding site" evidence="1">
    <location>
        <position position="14"/>
    </location>
    <ligand>
        <name>a divalent metal cation</name>
        <dbReference type="ChEBI" id="CHEBI:60240"/>
    </ligand>
</feature>
<feature type="binding site" evidence="1">
    <location>
        <begin position="38"/>
        <end position="39"/>
    </location>
    <ligand>
        <name>4-CDP-2-C-methyl-D-erythritol 2-phosphate</name>
        <dbReference type="ChEBI" id="CHEBI:57919"/>
    </ligand>
</feature>
<feature type="binding site" evidence="1">
    <location>
        <position position="46"/>
    </location>
    <ligand>
        <name>a divalent metal cation</name>
        <dbReference type="ChEBI" id="CHEBI:60240"/>
    </ligand>
</feature>
<feature type="binding site" evidence="1">
    <location>
        <begin position="60"/>
        <end position="62"/>
    </location>
    <ligand>
        <name>4-CDP-2-C-methyl-D-erythritol 2-phosphate</name>
        <dbReference type="ChEBI" id="CHEBI:57919"/>
    </ligand>
</feature>
<feature type="binding site" evidence="1">
    <location>
        <begin position="136"/>
        <end position="139"/>
    </location>
    <ligand>
        <name>4-CDP-2-C-methyl-D-erythritol 2-phosphate</name>
        <dbReference type="ChEBI" id="CHEBI:57919"/>
    </ligand>
</feature>
<feature type="binding site" evidence="1">
    <location>
        <position position="143"/>
    </location>
    <ligand>
        <name>4-CDP-2-C-methyl-D-erythritol 2-phosphate</name>
        <dbReference type="ChEBI" id="CHEBI:57919"/>
    </ligand>
</feature>
<feature type="binding site" evidence="1">
    <location>
        <position position="146"/>
    </location>
    <ligand>
        <name>4-CDP-2-C-methyl-D-erythritol 2-phosphate</name>
        <dbReference type="ChEBI" id="CHEBI:57919"/>
    </ligand>
</feature>
<feature type="site" description="Transition state stabilizer" evidence="1">
    <location>
        <position position="38"/>
    </location>
</feature>
<feature type="site" description="Transition state stabilizer" evidence="1">
    <location>
        <position position="137"/>
    </location>
</feature>
<comment type="function">
    <text evidence="1">Involved in the biosynthesis of isopentenyl diphosphate (IPP) and dimethylallyl diphosphate (DMAPP), two major building blocks of isoprenoid compounds. Catalyzes the conversion of 4-diphosphocytidyl-2-C-methyl-D-erythritol 2-phosphate (CDP-ME2P) to 2-C-methyl-D-erythritol 2,4-cyclodiphosphate (ME-CPP) with a corresponding release of cytidine 5-monophosphate (CMP).</text>
</comment>
<comment type="catalytic activity">
    <reaction evidence="1">
        <text>4-CDP-2-C-methyl-D-erythritol 2-phosphate = 2-C-methyl-D-erythritol 2,4-cyclic diphosphate + CMP</text>
        <dbReference type="Rhea" id="RHEA:23864"/>
        <dbReference type="ChEBI" id="CHEBI:57919"/>
        <dbReference type="ChEBI" id="CHEBI:58483"/>
        <dbReference type="ChEBI" id="CHEBI:60377"/>
        <dbReference type="EC" id="4.6.1.12"/>
    </reaction>
</comment>
<comment type="cofactor">
    <cofactor evidence="1">
        <name>a divalent metal cation</name>
        <dbReference type="ChEBI" id="CHEBI:60240"/>
    </cofactor>
    <text evidence="1">Binds 1 divalent metal cation per subunit.</text>
</comment>
<comment type="pathway">
    <text evidence="1">Isoprenoid biosynthesis; isopentenyl diphosphate biosynthesis via DXP pathway; isopentenyl diphosphate from 1-deoxy-D-xylulose 5-phosphate: step 4/6.</text>
</comment>
<comment type="subunit">
    <text evidence="1">Homotrimer.</text>
</comment>
<comment type="similarity">
    <text evidence="1">Belongs to the IspF family.</text>
</comment>
<dbReference type="EC" id="4.6.1.12" evidence="1"/>
<dbReference type="EMBL" id="AP009380">
    <property type="protein sequence ID" value="BAG32543.1"/>
    <property type="molecule type" value="Genomic_DNA"/>
</dbReference>
<dbReference type="RefSeq" id="WP_012457178.1">
    <property type="nucleotide sequence ID" value="NC_010729.1"/>
</dbReference>
<dbReference type="SMR" id="B2RGP8"/>
<dbReference type="GeneID" id="29255283"/>
<dbReference type="KEGG" id="pgn:PGN_0024"/>
<dbReference type="eggNOG" id="COG0245">
    <property type="taxonomic scope" value="Bacteria"/>
</dbReference>
<dbReference type="HOGENOM" id="CLU_084630_2_0_10"/>
<dbReference type="OrthoDB" id="9804336at2"/>
<dbReference type="BioCyc" id="PGIN431947:G1G2V-23-MONOMER"/>
<dbReference type="UniPathway" id="UPA00056">
    <property type="reaction ID" value="UER00095"/>
</dbReference>
<dbReference type="Proteomes" id="UP000008842">
    <property type="component" value="Chromosome"/>
</dbReference>
<dbReference type="GO" id="GO:0008685">
    <property type="term" value="F:2-C-methyl-D-erythritol 2,4-cyclodiphosphate synthase activity"/>
    <property type="evidence" value="ECO:0007669"/>
    <property type="project" value="UniProtKB-UniRule"/>
</dbReference>
<dbReference type="GO" id="GO:0046872">
    <property type="term" value="F:metal ion binding"/>
    <property type="evidence" value="ECO:0007669"/>
    <property type="project" value="UniProtKB-KW"/>
</dbReference>
<dbReference type="GO" id="GO:0019288">
    <property type="term" value="P:isopentenyl diphosphate biosynthetic process, methylerythritol 4-phosphate pathway"/>
    <property type="evidence" value="ECO:0007669"/>
    <property type="project" value="UniProtKB-UniRule"/>
</dbReference>
<dbReference type="GO" id="GO:0016114">
    <property type="term" value="P:terpenoid biosynthetic process"/>
    <property type="evidence" value="ECO:0007669"/>
    <property type="project" value="InterPro"/>
</dbReference>
<dbReference type="CDD" id="cd00554">
    <property type="entry name" value="MECDP_synthase"/>
    <property type="match status" value="1"/>
</dbReference>
<dbReference type="FunFam" id="3.30.1330.50:FF:000001">
    <property type="entry name" value="2-C-methyl-D-erythritol 2,4-cyclodiphosphate synthase"/>
    <property type="match status" value="1"/>
</dbReference>
<dbReference type="Gene3D" id="3.30.1330.50">
    <property type="entry name" value="2-C-methyl-D-erythritol 2,4-cyclodiphosphate synthase"/>
    <property type="match status" value="1"/>
</dbReference>
<dbReference type="HAMAP" id="MF_00107">
    <property type="entry name" value="IspF"/>
    <property type="match status" value="1"/>
</dbReference>
<dbReference type="InterPro" id="IPR003526">
    <property type="entry name" value="MECDP_synthase"/>
</dbReference>
<dbReference type="InterPro" id="IPR020555">
    <property type="entry name" value="MECDP_synthase_CS"/>
</dbReference>
<dbReference type="InterPro" id="IPR036571">
    <property type="entry name" value="MECDP_synthase_sf"/>
</dbReference>
<dbReference type="NCBIfam" id="TIGR00151">
    <property type="entry name" value="ispF"/>
    <property type="match status" value="1"/>
</dbReference>
<dbReference type="PANTHER" id="PTHR43181">
    <property type="entry name" value="2-C-METHYL-D-ERYTHRITOL 2,4-CYCLODIPHOSPHATE SYNTHASE, CHLOROPLASTIC"/>
    <property type="match status" value="1"/>
</dbReference>
<dbReference type="PANTHER" id="PTHR43181:SF1">
    <property type="entry name" value="2-C-METHYL-D-ERYTHRITOL 2,4-CYCLODIPHOSPHATE SYNTHASE, CHLOROPLASTIC"/>
    <property type="match status" value="1"/>
</dbReference>
<dbReference type="Pfam" id="PF02542">
    <property type="entry name" value="YgbB"/>
    <property type="match status" value="1"/>
</dbReference>
<dbReference type="SUPFAM" id="SSF69765">
    <property type="entry name" value="IpsF-like"/>
    <property type="match status" value="1"/>
</dbReference>
<dbReference type="PROSITE" id="PS01350">
    <property type="entry name" value="ISPF"/>
    <property type="match status" value="1"/>
</dbReference>
<reference key="1">
    <citation type="journal article" date="2008" name="DNA Res.">
        <title>Determination of the genome sequence of Porphyromonas gingivalis strain ATCC 33277 and genomic comparison with strain W83 revealed extensive genome rearrangements in P. gingivalis.</title>
        <authorList>
            <person name="Naito M."/>
            <person name="Hirakawa H."/>
            <person name="Yamashita A."/>
            <person name="Ohara N."/>
            <person name="Shoji M."/>
            <person name="Yukitake H."/>
            <person name="Nakayama K."/>
            <person name="Toh H."/>
            <person name="Yoshimura F."/>
            <person name="Kuhara S."/>
            <person name="Hattori M."/>
            <person name="Hayashi T."/>
            <person name="Nakayama K."/>
        </authorList>
    </citation>
    <scope>NUCLEOTIDE SEQUENCE [LARGE SCALE GENOMIC DNA]</scope>
    <source>
        <strain>ATCC 33277 / DSM 20709 / CIP 103683 / JCM 12257 / NCTC 11834 / 2561</strain>
    </source>
</reference>
<organism>
    <name type="scientific">Porphyromonas gingivalis (strain ATCC 33277 / DSM 20709 / CIP 103683 / JCM 12257 / NCTC 11834 / 2561)</name>
    <dbReference type="NCBI Taxonomy" id="431947"/>
    <lineage>
        <taxon>Bacteria</taxon>
        <taxon>Pseudomonadati</taxon>
        <taxon>Bacteroidota</taxon>
        <taxon>Bacteroidia</taxon>
        <taxon>Bacteroidales</taxon>
        <taxon>Porphyromonadaceae</taxon>
        <taxon>Porphyromonas</taxon>
    </lineage>
</organism>